<feature type="chain" id="PRO_0000270627" description="Probable pyridoxal 5'-phosphate synthase subunit PDX1.1">
    <location>
        <begin position="1"/>
        <end position="318"/>
    </location>
</feature>
<feature type="active site" description="Schiff-base intermediate with D-ribose 5-phosphate" evidence="1">
    <location>
        <position position="106"/>
    </location>
</feature>
<feature type="binding site" evidence="1">
    <location>
        <position position="49"/>
    </location>
    <ligand>
        <name>D-ribose 5-phosphate</name>
        <dbReference type="ChEBI" id="CHEBI:78346"/>
    </ligand>
</feature>
<feature type="binding site" evidence="1">
    <location>
        <position position="178"/>
    </location>
    <ligand>
        <name>D-ribose 5-phosphate</name>
        <dbReference type="ChEBI" id="CHEBI:78346"/>
    </ligand>
</feature>
<feature type="binding site" evidence="3">
    <location>
        <position position="190"/>
    </location>
    <ligand>
        <name>D-glyceraldehyde 3-phosphate</name>
        <dbReference type="ChEBI" id="CHEBI:59776"/>
    </ligand>
</feature>
<feature type="binding site" evidence="1">
    <location>
        <position position="239"/>
    </location>
    <ligand>
        <name>D-ribose 5-phosphate</name>
        <dbReference type="ChEBI" id="CHEBI:78346"/>
    </ligand>
</feature>
<feature type="binding site" evidence="1">
    <location>
        <begin position="260"/>
        <end position="261"/>
    </location>
    <ligand>
        <name>D-ribose 5-phosphate</name>
        <dbReference type="ChEBI" id="CHEBI:78346"/>
    </ligand>
</feature>
<protein>
    <recommendedName>
        <fullName>Probable pyridoxal 5'-phosphate synthase subunit PDX1.1</fullName>
        <shortName>PLP synthase subunit PDX1.1</shortName>
        <ecNumber>4.3.3.6</ecNumber>
    </recommendedName>
</protein>
<name>PDX11_ORYSJ</name>
<proteinExistence type="evidence at transcript level"/>
<reference key="1">
    <citation type="journal article" date="2006" name="Plant J.">
        <title>Sequencing and characterization of telomere and subtelomere regions on rice chromosomes 1S, 2S, 2L, 6L, 7S, 7L and 8S.</title>
        <authorList>
            <person name="Mizuno H."/>
            <person name="Wu J."/>
            <person name="Kanamori H."/>
            <person name="Fujisawa M."/>
            <person name="Namiki N."/>
            <person name="Saji S."/>
            <person name="Katagiri S."/>
            <person name="Katayose Y."/>
            <person name="Sasaki T."/>
            <person name="Matsumoto T."/>
        </authorList>
    </citation>
    <scope>NUCLEOTIDE SEQUENCE [LARGE SCALE GENOMIC DNA]</scope>
</reference>
<reference key="2">
    <citation type="journal article" date="2005" name="Nature">
        <title>The map-based sequence of the rice genome.</title>
        <authorList>
            <consortium name="International rice genome sequencing project (IRGSP)"/>
        </authorList>
    </citation>
    <scope>NUCLEOTIDE SEQUENCE [LARGE SCALE GENOMIC DNA]</scope>
    <source>
        <strain>cv. Nipponbare</strain>
    </source>
</reference>
<reference key="3">
    <citation type="journal article" date="2008" name="Nucleic Acids Res.">
        <title>The rice annotation project database (RAP-DB): 2008 update.</title>
        <authorList>
            <consortium name="The rice annotation project (RAP)"/>
        </authorList>
    </citation>
    <scope>GENOME REANNOTATION</scope>
    <source>
        <strain>cv. Nipponbare</strain>
    </source>
</reference>
<reference key="4">
    <citation type="journal article" date="2013" name="Rice">
        <title>Improvement of the Oryza sativa Nipponbare reference genome using next generation sequence and optical map data.</title>
        <authorList>
            <person name="Kawahara Y."/>
            <person name="de la Bastide M."/>
            <person name="Hamilton J.P."/>
            <person name="Kanamori H."/>
            <person name="McCombie W.R."/>
            <person name="Ouyang S."/>
            <person name="Schwartz D.C."/>
            <person name="Tanaka T."/>
            <person name="Wu J."/>
            <person name="Zhou S."/>
            <person name="Childs K.L."/>
            <person name="Davidson R.M."/>
            <person name="Lin H."/>
            <person name="Quesada-Ocampo L."/>
            <person name="Vaillancourt B."/>
            <person name="Sakai H."/>
            <person name="Lee S.S."/>
            <person name="Kim J."/>
            <person name="Numa H."/>
            <person name="Itoh T."/>
            <person name="Buell C.R."/>
            <person name="Matsumoto T."/>
        </authorList>
    </citation>
    <scope>GENOME REANNOTATION</scope>
    <source>
        <strain>cv. Nipponbare</strain>
    </source>
</reference>
<reference key="5">
    <citation type="journal article" date="2003" name="Science">
        <title>Collection, mapping, and annotation of over 28,000 cDNA clones from japonica rice.</title>
        <authorList>
            <consortium name="The rice full-length cDNA consortium"/>
        </authorList>
    </citation>
    <scope>NUCLEOTIDE SEQUENCE [LARGE SCALE MRNA]</scope>
    <source>
        <strain>cv. Nipponbare</strain>
    </source>
</reference>
<sequence length="318" mass="33737">MATDGTGVVTVYGSGTNGAALLEPSNHKSATFSVKVGLAQMLRGGVIMDVVTPEQARIAEEAGACAVMALERVPADIRAQGGVARMSDPGLIRDIKRAVTIPVMAKARIGHFVEAQILEAIGVDYVDESEVLTLADDAHHINKHNFRVPFVCGCRDLGEALRRIREGAAMIRTKGEAGTGNVVEAVRHVRSVMGDIRALRNMDDDEVFSYAKRIAAPYDLVMQTKQLGRLPVVQFAAGGVATPADAALMMQLGCDGVFVGSGIFKSGDPARRARAIVQAVTHYSDPKILAEVSSGLGEAMVGINLSDPKVERFAARSE</sequence>
<organism>
    <name type="scientific">Oryza sativa subsp. japonica</name>
    <name type="common">Rice</name>
    <dbReference type="NCBI Taxonomy" id="39947"/>
    <lineage>
        <taxon>Eukaryota</taxon>
        <taxon>Viridiplantae</taxon>
        <taxon>Streptophyta</taxon>
        <taxon>Embryophyta</taxon>
        <taxon>Tracheophyta</taxon>
        <taxon>Spermatophyta</taxon>
        <taxon>Magnoliopsida</taxon>
        <taxon>Liliopsida</taxon>
        <taxon>Poales</taxon>
        <taxon>Poaceae</taxon>
        <taxon>BOP clade</taxon>
        <taxon>Oryzoideae</taxon>
        <taxon>Oryzeae</taxon>
        <taxon>Oryzinae</taxon>
        <taxon>Oryza</taxon>
        <taxon>Oryza sativa</taxon>
    </lineage>
</organism>
<accession>Q69LA6</accession>
<accession>B7E5L2</accession>
<dbReference type="EC" id="4.3.3.6"/>
<dbReference type="EMBL" id="AP008222">
    <property type="protein sequence ID" value="BAE79758.1"/>
    <property type="molecule type" value="Genomic_DNA"/>
</dbReference>
<dbReference type="EMBL" id="AP005869">
    <property type="protein sequence ID" value="BAD31816.1"/>
    <property type="molecule type" value="Genomic_DNA"/>
</dbReference>
<dbReference type="EMBL" id="AP008213">
    <property type="protein sequence ID" value="BAF20583.1"/>
    <property type="molecule type" value="Genomic_DNA"/>
</dbReference>
<dbReference type="EMBL" id="AP014963">
    <property type="protein sequence ID" value="BAS99667.1"/>
    <property type="molecule type" value="Genomic_DNA"/>
</dbReference>
<dbReference type="EMBL" id="AK060986">
    <property type="protein sequence ID" value="BAG87659.1"/>
    <property type="molecule type" value="mRNA"/>
</dbReference>
<dbReference type="EMBL" id="AK073305">
    <property type="protein sequence ID" value="BAG93387.1"/>
    <property type="molecule type" value="mRNA"/>
</dbReference>
<dbReference type="RefSeq" id="XP_015646521.1">
    <property type="nucleotide sequence ID" value="XM_015791035.1"/>
</dbReference>
<dbReference type="SMR" id="Q69LA6"/>
<dbReference type="FunCoup" id="Q69LA6">
    <property type="interactions" value="639"/>
</dbReference>
<dbReference type="STRING" id="39947.Q69LA6"/>
<dbReference type="PaxDb" id="39947-Q69LA6"/>
<dbReference type="EnsemblPlants" id="Os07t0100200-01">
    <property type="protein sequence ID" value="Os07t0100200-01"/>
    <property type="gene ID" value="Os07g0100200"/>
</dbReference>
<dbReference type="Gramene" id="Os07t0100200-01">
    <property type="protein sequence ID" value="Os07t0100200-01"/>
    <property type="gene ID" value="Os07g0100200"/>
</dbReference>
<dbReference type="KEGG" id="dosa:Os07g0100200"/>
<dbReference type="eggNOG" id="KOG1606">
    <property type="taxonomic scope" value="Eukaryota"/>
</dbReference>
<dbReference type="HOGENOM" id="CLU_055352_1_1_1"/>
<dbReference type="InParanoid" id="Q69LA6"/>
<dbReference type="OMA" id="EKGFNSY"/>
<dbReference type="OrthoDB" id="1660966at2759"/>
<dbReference type="UniPathway" id="UPA00245"/>
<dbReference type="Proteomes" id="UP000000763">
    <property type="component" value="Chromosome 7"/>
</dbReference>
<dbReference type="Proteomes" id="UP000059680">
    <property type="component" value="Chromosome 7"/>
</dbReference>
<dbReference type="GO" id="GO:0016843">
    <property type="term" value="F:amine-lyase activity"/>
    <property type="evidence" value="ECO:0000318"/>
    <property type="project" value="GO_Central"/>
</dbReference>
<dbReference type="GO" id="GO:0036381">
    <property type="term" value="F:pyridoxal 5'-phosphate synthase (glutamine hydrolysing) activity"/>
    <property type="evidence" value="ECO:0007669"/>
    <property type="project" value="UniProtKB-EC"/>
</dbReference>
<dbReference type="GO" id="GO:0006520">
    <property type="term" value="P:amino acid metabolic process"/>
    <property type="evidence" value="ECO:0000318"/>
    <property type="project" value="GO_Central"/>
</dbReference>
<dbReference type="GO" id="GO:0042823">
    <property type="term" value="P:pyridoxal phosphate biosynthetic process"/>
    <property type="evidence" value="ECO:0000318"/>
    <property type="project" value="GO_Central"/>
</dbReference>
<dbReference type="GO" id="GO:0008615">
    <property type="term" value="P:pyridoxine biosynthetic process"/>
    <property type="evidence" value="ECO:0000318"/>
    <property type="project" value="GO_Central"/>
</dbReference>
<dbReference type="CDD" id="cd04727">
    <property type="entry name" value="pdxS"/>
    <property type="match status" value="1"/>
</dbReference>
<dbReference type="FunFam" id="3.20.20.70:FF:000001">
    <property type="entry name" value="Pyridoxine biosynthesis protein PDX1"/>
    <property type="match status" value="1"/>
</dbReference>
<dbReference type="Gene3D" id="3.20.20.70">
    <property type="entry name" value="Aldolase class I"/>
    <property type="match status" value="1"/>
</dbReference>
<dbReference type="HAMAP" id="MF_01824">
    <property type="entry name" value="PdxS"/>
    <property type="match status" value="1"/>
</dbReference>
<dbReference type="InterPro" id="IPR013785">
    <property type="entry name" value="Aldolase_TIM"/>
</dbReference>
<dbReference type="InterPro" id="IPR001852">
    <property type="entry name" value="PdxS/SNZ"/>
</dbReference>
<dbReference type="InterPro" id="IPR033755">
    <property type="entry name" value="PdxS/SNZ_N"/>
</dbReference>
<dbReference type="InterPro" id="IPR011060">
    <property type="entry name" value="RibuloseP-bd_barrel"/>
</dbReference>
<dbReference type="NCBIfam" id="NF003215">
    <property type="entry name" value="PRK04180.1"/>
    <property type="match status" value="1"/>
</dbReference>
<dbReference type="NCBIfam" id="TIGR00343">
    <property type="entry name" value="pyridoxal 5'-phosphate synthase lyase subunit PdxS"/>
    <property type="match status" value="1"/>
</dbReference>
<dbReference type="PANTHER" id="PTHR31829">
    <property type="entry name" value="PYRIDOXAL 5'-PHOSPHATE SYNTHASE SUBUNIT SNZ1-RELATED"/>
    <property type="match status" value="1"/>
</dbReference>
<dbReference type="PANTHER" id="PTHR31829:SF0">
    <property type="entry name" value="PYRIDOXAL 5'-PHOSPHATE SYNTHASE SUBUNIT SNZ1-RELATED"/>
    <property type="match status" value="1"/>
</dbReference>
<dbReference type="Pfam" id="PF01680">
    <property type="entry name" value="SOR_SNZ"/>
    <property type="match status" value="1"/>
</dbReference>
<dbReference type="PIRSF" id="PIRSF029271">
    <property type="entry name" value="Pdx1"/>
    <property type="match status" value="1"/>
</dbReference>
<dbReference type="SUPFAM" id="SSF51366">
    <property type="entry name" value="Ribulose-phoshate binding barrel"/>
    <property type="match status" value="1"/>
</dbReference>
<dbReference type="PROSITE" id="PS01235">
    <property type="entry name" value="PDXS_SNZ_1"/>
    <property type="match status" value="1"/>
</dbReference>
<dbReference type="PROSITE" id="PS51129">
    <property type="entry name" value="PDXS_SNZ_2"/>
    <property type="match status" value="1"/>
</dbReference>
<keyword id="KW-0456">Lyase</keyword>
<keyword id="KW-0663">Pyridoxal phosphate</keyword>
<keyword id="KW-1185">Reference proteome</keyword>
<keyword id="KW-0704">Schiff base</keyword>
<evidence type="ECO:0000250" key="1">
    <source>
        <dbReference type="UniProtKB" id="O59080"/>
    </source>
</evidence>
<evidence type="ECO:0000250" key="2">
    <source>
        <dbReference type="UniProtKB" id="O80448"/>
    </source>
</evidence>
<evidence type="ECO:0000250" key="3">
    <source>
        <dbReference type="UniProtKB" id="Q03148"/>
    </source>
</evidence>
<evidence type="ECO:0000305" key="4"/>
<gene>
    <name type="primary">PDX11</name>
    <name type="ordered locus">Os07g0100200</name>
    <name type="ordered locus">LOC_Os07g01020</name>
    <name type="ORF">B1026C12.3</name>
    <name type="ORF">OSJNOa219C16.3</name>
</gene>
<comment type="function">
    <text evidence="2">Catalyzes the formation of pyridoxal 5'-phosphate from ribose 5-phosphate (RBP), glyceraldehyde 3-phosphate (G3P) and ammonia. The ammonia is provided by PDX2. Can also use ribulose 5-phosphate and dihydroxyacetone phosphate as substrates, resulting from enzyme-catalyzed isomerization of RBP and G3P, respectively. Also plays an indirect role in resistance to singlet oxygen-generating photosensitizers.</text>
</comment>
<comment type="catalytic activity">
    <reaction evidence="3">
        <text>aldehydo-D-ribose 5-phosphate + D-glyceraldehyde 3-phosphate + L-glutamine = pyridoxal 5'-phosphate + L-glutamate + phosphate + 3 H2O + H(+)</text>
        <dbReference type="Rhea" id="RHEA:31507"/>
        <dbReference type="ChEBI" id="CHEBI:15377"/>
        <dbReference type="ChEBI" id="CHEBI:15378"/>
        <dbReference type="ChEBI" id="CHEBI:29985"/>
        <dbReference type="ChEBI" id="CHEBI:43474"/>
        <dbReference type="ChEBI" id="CHEBI:58273"/>
        <dbReference type="ChEBI" id="CHEBI:58359"/>
        <dbReference type="ChEBI" id="CHEBI:59776"/>
        <dbReference type="ChEBI" id="CHEBI:597326"/>
        <dbReference type="EC" id="4.3.3.6"/>
    </reaction>
</comment>
<comment type="pathway">
    <text>Cofactor biosynthesis; pyridoxal 5'-phosphate biosynthesis.</text>
</comment>
<comment type="miscellaneous">
    <text>Vitamin B6 is an essential quencher of singlet oxygen in plants, that can protect cellular membranes from lipid peroxidation.</text>
</comment>
<comment type="similarity">
    <text evidence="4">Belongs to the PdxS/SNZ family.</text>
</comment>